<reference key="1">
    <citation type="journal article" date="2004" name="Nucleic Acids Res.">
        <title>The genome sequence of Bacillus cereus ATCC 10987 reveals metabolic adaptations and a large plasmid related to Bacillus anthracis pXO1.</title>
        <authorList>
            <person name="Rasko D.A."/>
            <person name="Ravel J."/>
            <person name="Oekstad O.A."/>
            <person name="Helgason E."/>
            <person name="Cer R.Z."/>
            <person name="Jiang L."/>
            <person name="Shores K.A."/>
            <person name="Fouts D.E."/>
            <person name="Tourasse N.J."/>
            <person name="Angiuoli S.V."/>
            <person name="Kolonay J.F."/>
            <person name="Nelson W.C."/>
            <person name="Kolstoe A.-B."/>
            <person name="Fraser C.M."/>
            <person name="Read T.D."/>
        </authorList>
    </citation>
    <scope>NUCLEOTIDE SEQUENCE [LARGE SCALE GENOMIC DNA]</scope>
    <source>
        <strain>ATCC 10987 / NRS 248</strain>
    </source>
</reference>
<evidence type="ECO:0000255" key="1">
    <source>
        <dbReference type="HAMAP-Rule" id="MF_00124"/>
    </source>
</evidence>
<name>KITH_BACC1</name>
<proteinExistence type="inferred from homology"/>
<protein>
    <recommendedName>
        <fullName evidence="1">Thymidine kinase</fullName>
        <ecNumber evidence="1">2.7.1.21</ecNumber>
    </recommendedName>
</protein>
<organism>
    <name type="scientific">Bacillus cereus (strain ATCC 10987 / NRS 248)</name>
    <dbReference type="NCBI Taxonomy" id="222523"/>
    <lineage>
        <taxon>Bacteria</taxon>
        <taxon>Bacillati</taxon>
        <taxon>Bacillota</taxon>
        <taxon>Bacilli</taxon>
        <taxon>Bacillales</taxon>
        <taxon>Bacillaceae</taxon>
        <taxon>Bacillus</taxon>
        <taxon>Bacillus cereus group</taxon>
    </lineage>
</organism>
<keyword id="KW-0067">ATP-binding</keyword>
<keyword id="KW-0963">Cytoplasm</keyword>
<keyword id="KW-0237">DNA synthesis</keyword>
<keyword id="KW-0418">Kinase</keyword>
<keyword id="KW-0479">Metal-binding</keyword>
<keyword id="KW-0547">Nucleotide-binding</keyword>
<keyword id="KW-0808">Transferase</keyword>
<keyword id="KW-0862">Zinc</keyword>
<dbReference type="EC" id="2.7.1.21" evidence="1"/>
<dbReference type="EMBL" id="AE017194">
    <property type="protein sequence ID" value="AAS44357.1"/>
    <property type="molecule type" value="Genomic_DNA"/>
</dbReference>
<dbReference type="KEGG" id="bca:BCE_5457"/>
<dbReference type="HOGENOM" id="CLU_064400_3_0_9"/>
<dbReference type="Proteomes" id="UP000002527">
    <property type="component" value="Chromosome"/>
</dbReference>
<dbReference type="GO" id="GO:0005829">
    <property type="term" value="C:cytosol"/>
    <property type="evidence" value="ECO:0007669"/>
    <property type="project" value="TreeGrafter"/>
</dbReference>
<dbReference type="GO" id="GO:0005524">
    <property type="term" value="F:ATP binding"/>
    <property type="evidence" value="ECO:0007669"/>
    <property type="project" value="UniProtKB-UniRule"/>
</dbReference>
<dbReference type="GO" id="GO:0046872">
    <property type="term" value="F:metal ion binding"/>
    <property type="evidence" value="ECO:0007669"/>
    <property type="project" value="UniProtKB-KW"/>
</dbReference>
<dbReference type="GO" id="GO:0004797">
    <property type="term" value="F:thymidine kinase activity"/>
    <property type="evidence" value="ECO:0007669"/>
    <property type="project" value="UniProtKB-UniRule"/>
</dbReference>
<dbReference type="GO" id="GO:0071897">
    <property type="term" value="P:DNA biosynthetic process"/>
    <property type="evidence" value="ECO:0007669"/>
    <property type="project" value="UniProtKB-KW"/>
</dbReference>
<dbReference type="GO" id="GO:0046104">
    <property type="term" value="P:thymidine metabolic process"/>
    <property type="evidence" value="ECO:0007669"/>
    <property type="project" value="TreeGrafter"/>
</dbReference>
<dbReference type="FunFam" id="3.30.60.20:FF:000026">
    <property type="entry name" value="Thymidine kinase"/>
    <property type="match status" value="1"/>
</dbReference>
<dbReference type="FunFam" id="3.40.50.300:FF:000384">
    <property type="entry name" value="Thymidine kinase"/>
    <property type="match status" value="1"/>
</dbReference>
<dbReference type="Gene3D" id="3.30.60.20">
    <property type="match status" value="1"/>
</dbReference>
<dbReference type="Gene3D" id="3.40.50.300">
    <property type="entry name" value="P-loop containing nucleotide triphosphate hydrolases"/>
    <property type="match status" value="1"/>
</dbReference>
<dbReference type="HAMAP" id="MF_00124">
    <property type="entry name" value="Thymidine_kinase"/>
    <property type="match status" value="1"/>
</dbReference>
<dbReference type="InterPro" id="IPR027417">
    <property type="entry name" value="P-loop_NTPase"/>
</dbReference>
<dbReference type="InterPro" id="IPR001267">
    <property type="entry name" value="Thymidine_kinase"/>
</dbReference>
<dbReference type="NCBIfam" id="NF003296">
    <property type="entry name" value="PRK04296.1-1"/>
    <property type="match status" value="1"/>
</dbReference>
<dbReference type="PANTHER" id="PTHR11441">
    <property type="entry name" value="THYMIDINE KINASE"/>
    <property type="match status" value="1"/>
</dbReference>
<dbReference type="PANTHER" id="PTHR11441:SF0">
    <property type="entry name" value="THYMIDINE KINASE, CYTOSOLIC"/>
    <property type="match status" value="1"/>
</dbReference>
<dbReference type="Pfam" id="PF00265">
    <property type="entry name" value="TK"/>
    <property type="match status" value="1"/>
</dbReference>
<dbReference type="PIRSF" id="PIRSF035805">
    <property type="entry name" value="TK_cell"/>
    <property type="match status" value="1"/>
</dbReference>
<dbReference type="SUPFAM" id="SSF57716">
    <property type="entry name" value="Glucocorticoid receptor-like (DNA-binding domain)"/>
    <property type="match status" value="1"/>
</dbReference>
<dbReference type="SUPFAM" id="SSF52540">
    <property type="entry name" value="P-loop containing nucleoside triphosphate hydrolases"/>
    <property type="match status" value="1"/>
</dbReference>
<dbReference type="PROSITE" id="PS00603">
    <property type="entry name" value="TK_CELLULAR_TYPE"/>
    <property type="match status" value="1"/>
</dbReference>
<comment type="catalytic activity">
    <reaction evidence="1">
        <text>thymidine + ATP = dTMP + ADP + H(+)</text>
        <dbReference type="Rhea" id="RHEA:19129"/>
        <dbReference type="ChEBI" id="CHEBI:15378"/>
        <dbReference type="ChEBI" id="CHEBI:17748"/>
        <dbReference type="ChEBI" id="CHEBI:30616"/>
        <dbReference type="ChEBI" id="CHEBI:63528"/>
        <dbReference type="ChEBI" id="CHEBI:456216"/>
        <dbReference type="EC" id="2.7.1.21"/>
    </reaction>
</comment>
<comment type="subunit">
    <text evidence="1">Homotetramer.</text>
</comment>
<comment type="subcellular location">
    <subcellularLocation>
        <location evidence="1">Cytoplasm</location>
    </subcellularLocation>
</comment>
<comment type="similarity">
    <text evidence="1">Belongs to the thymidine kinase family.</text>
</comment>
<gene>
    <name evidence="1" type="primary">tdk</name>
    <name type="ordered locus">BCE_5457</name>
</gene>
<accession>Q72XC1</accession>
<feature type="chain" id="PRO_0000174954" description="Thymidine kinase">
    <location>
        <begin position="1"/>
        <end position="195"/>
    </location>
</feature>
<feature type="active site" description="Proton acceptor" evidence="1">
    <location>
        <position position="89"/>
    </location>
</feature>
<feature type="binding site" evidence="1">
    <location>
        <begin position="15"/>
        <end position="22"/>
    </location>
    <ligand>
        <name>ATP</name>
        <dbReference type="ChEBI" id="CHEBI:30616"/>
    </ligand>
</feature>
<feature type="binding site" evidence="1">
    <location>
        <begin position="88"/>
        <end position="91"/>
    </location>
    <ligand>
        <name>ATP</name>
        <dbReference type="ChEBI" id="CHEBI:30616"/>
    </ligand>
</feature>
<feature type="binding site" evidence="1">
    <location>
        <position position="145"/>
    </location>
    <ligand>
        <name>Zn(2+)</name>
        <dbReference type="ChEBI" id="CHEBI:29105"/>
    </ligand>
</feature>
<feature type="binding site" evidence="1">
    <location>
        <position position="148"/>
    </location>
    <ligand>
        <name>Zn(2+)</name>
        <dbReference type="ChEBI" id="CHEBI:29105"/>
    </ligand>
</feature>
<feature type="binding site" evidence="1">
    <location>
        <position position="183"/>
    </location>
    <ligand>
        <name>Zn(2+)</name>
        <dbReference type="ChEBI" id="CHEBI:29105"/>
    </ligand>
</feature>
<feature type="binding site" evidence="1">
    <location>
        <position position="186"/>
    </location>
    <ligand>
        <name>Zn(2+)</name>
        <dbReference type="ChEBI" id="CHEBI:29105"/>
    </ligand>
</feature>
<sequence length="195" mass="21724">MYLINQNGWIEVICGSMFSGKSEELIRRVRRTQFAKQHAIVFKPCIDNRYSEEDVVSHNGLKVKAVPVSASKDIFEHITEEMDVIAIDEVQFFDGDIVEVVQVLANRGYRVIVAGLDQDFRGLPFGQVPQLMAIAEHVTKLQAVCSACGSPASRTQRLIDGEPAAFDDPIILVGASESYEPRCRHXHAVPTNKDK</sequence>